<organism>
    <name type="scientific">Escherichia coli O157:H7 (strain EC4115 / EHEC)</name>
    <dbReference type="NCBI Taxonomy" id="444450"/>
    <lineage>
        <taxon>Bacteria</taxon>
        <taxon>Pseudomonadati</taxon>
        <taxon>Pseudomonadota</taxon>
        <taxon>Gammaproteobacteria</taxon>
        <taxon>Enterobacterales</taxon>
        <taxon>Enterobacteriaceae</taxon>
        <taxon>Escherichia</taxon>
    </lineage>
</organism>
<feature type="chain" id="PRO_1000125567" description="o-succinylbenzoate synthase">
    <location>
        <begin position="1"/>
        <end position="320"/>
    </location>
</feature>
<feature type="active site" description="Proton donor" evidence="1">
    <location>
        <position position="133"/>
    </location>
</feature>
<feature type="active site" description="Proton acceptor" evidence="1">
    <location>
        <position position="235"/>
    </location>
</feature>
<feature type="binding site" evidence="1">
    <location>
        <position position="161"/>
    </location>
    <ligand>
        <name>Mg(2+)</name>
        <dbReference type="ChEBI" id="CHEBI:18420"/>
    </ligand>
</feature>
<feature type="binding site" evidence="1">
    <location>
        <position position="190"/>
    </location>
    <ligand>
        <name>Mg(2+)</name>
        <dbReference type="ChEBI" id="CHEBI:18420"/>
    </ligand>
</feature>
<feature type="binding site" evidence="1">
    <location>
        <position position="213"/>
    </location>
    <ligand>
        <name>Mg(2+)</name>
        <dbReference type="ChEBI" id="CHEBI:18420"/>
    </ligand>
</feature>
<gene>
    <name evidence="1" type="primary">menC</name>
    <name type="ordered locus">ECH74115_3403</name>
</gene>
<name>MENC_ECO5E</name>
<comment type="function">
    <text evidence="1">Converts 2-succinyl-6-hydroxy-2,4-cyclohexadiene-1-carboxylate (SHCHC) to 2-succinylbenzoate (OSB).</text>
</comment>
<comment type="catalytic activity">
    <reaction evidence="1">
        <text>(1R,6R)-6-hydroxy-2-succinyl-cyclohexa-2,4-diene-1-carboxylate = 2-succinylbenzoate + H2O</text>
        <dbReference type="Rhea" id="RHEA:10196"/>
        <dbReference type="ChEBI" id="CHEBI:15377"/>
        <dbReference type="ChEBI" id="CHEBI:18325"/>
        <dbReference type="ChEBI" id="CHEBI:58689"/>
        <dbReference type="EC" id="4.2.1.113"/>
    </reaction>
</comment>
<comment type="cofactor">
    <cofactor evidence="1">
        <name>a divalent metal cation</name>
        <dbReference type="ChEBI" id="CHEBI:60240"/>
    </cofactor>
</comment>
<comment type="pathway">
    <text evidence="1">Quinol/quinone metabolism; 1,4-dihydroxy-2-naphthoate biosynthesis; 1,4-dihydroxy-2-naphthoate from chorismate: step 4/7.</text>
</comment>
<comment type="pathway">
    <text evidence="1">Quinol/quinone metabolism; menaquinone biosynthesis.</text>
</comment>
<comment type="similarity">
    <text evidence="1">Belongs to the mandelate racemase/muconate lactonizing enzyme family. MenC type 1 subfamily.</text>
</comment>
<proteinExistence type="inferred from homology"/>
<evidence type="ECO:0000255" key="1">
    <source>
        <dbReference type="HAMAP-Rule" id="MF_00470"/>
    </source>
</evidence>
<protein>
    <recommendedName>
        <fullName evidence="1">o-succinylbenzoate synthase</fullName>
        <shortName evidence="1">OSB synthase</shortName>
        <shortName evidence="1">OSBS</shortName>
        <ecNumber evidence="1">4.2.1.113</ecNumber>
    </recommendedName>
    <alternativeName>
        <fullName evidence="1">4-(2'-carboxyphenyl)-4-oxybutyric acid synthase</fullName>
    </alternativeName>
    <alternativeName>
        <fullName evidence="1">o-succinylbenzoic acid synthase</fullName>
    </alternativeName>
</protein>
<accession>B5YXQ5</accession>
<keyword id="KW-0456">Lyase</keyword>
<keyword id="KW-0460">Magnesium</keyword>
<keyword id="KW-0474">Menaquinone biosynthesis</keyword>
<keyword id="KW-0479">Metal-binding</keyword>
<reference key="1">
    <citation type="journal article" date="2011" name="Proc. Natl. Acad. Sci. U.S.A.">
        <title>Genomic anatomy of Escherichia coli O157:H7 outbreaks.</title>
        <authorList>
            <person name="Eppinger M."/>
            <person name="Mammel M.K."/>
            <person name="Leclerc J.E."/>
            <person name="Ravel J."/>
            <person name="Cebula T.A."/>
        </authorList>
    </citation>
    <scope>NUCLEOTIDE SEQUENCE [LARGE SCALE GENOMIC DNA]</scope>
    <source>
        <strain>EC4115 / EHEC</strain>
    </source>
</reference>
<dbReference type="EC" id="4.2.1.113" evidence="1"/>
<dbReference type="EMBL" id="CP001164">
    <property type="protein sequence ID" value="ACI36830.1"/>
    <property type="molecule type" value="Genomic_DNA"/>
</dbReference>
<dbReference type="RefSeq" id="WP_001255621.1">
    <property type="nucleotide sequence ID" value="NC_011353.1"/>
</dbReference>
<dbReference type="SMR" id="B5YXQ5"/>
<dbReference type="KEGG" id="ecf:ECH74115_3403"/>
<dbReference type="HOGENOM" id="CLU_030273_0_1_6"/>
<dbReference type="UniPathway" id="UPA00079"/>
<dbReference type="UniPathway" id="UPA01057">
    <property type="reaction ID" value="UER00165"/>
</dbReference>
<dbReference type="GO" id="GO:0000287">
    <property type="term" value="F:magnesium ion binding"/>
    <property type="evidence" value="ECO:0007669"/>
    <property type="project" value="UniProtKB-UniRule"/>
</dbReference>
<dbReference type="GO" id="GO:0043748">
    <property type="term" value="F:O-succinylbenzoate synthase activity"/>
    <property type="evidence" value="ECO:0007669"/>
    <property type="project" value="UniProtKB-EC"/>
</dbReference>
<dbReference type="GO" id="GO:0009234">
    <property type="term" value="P:menaquinone biosynthetic process"/>
    <property type="evidence" value="ECO:0007669"/>
    <property type="project" value="UniProtKB-UniRule"/>
</dbReference>
<dbReference type="CDD" id="cd03320">
    <property type="entry name" value="OSBS"/>
    <property type="match status" value="1"/>
</dbReference>
<dbReference type="FunFam" id="3.20.20.120:FF:000006">
    <property type="entry name" value="o-succinylbenzoate synthase"/>
    <property type="match status" value="1"/>
</dbReference>
<dbReference type="FunFam" id="3.30.390.10:FF:000005">
    <property type="entry name" value="o-succinylbenzoate synthase"/>
    <property type="match status" value="1"/>
</dbReference>
<dbReference type="Gene3D" id="3.20.20.120">
    <property type="entry name" value="Enolase-like C-terminal domain"/>
    <property type="match status" value="1"/>
</dbReference>
<dbReference type="Gene3D" id="3.30.390.10">
    <property type="entry name" value="Enolase-like, N-terminal domain"/>
    <property type="match status" value="1"/>
</dbReference>
<dbReference type="HAMAP" id="MF_00470">
    <property type="entry name" value="MenC_1"/>
    <property type="match status" value="1"/>
</dbReference>
<dbReference type="InterPro" id="IPR036849">
    <property type="entry name" value="Enolase-like_C_sf"/>
</dbReference>
<dbReference type="InterPro" id="IPR029017">
    <property type="entry name" value="Enolase-like_N"/>
</dbReference>
<dbReference type="InterPro" id="IPR029065">
    <property type="entry name" value="Enolase_C-like"/>
</dbReference>
<dbReference type="InterPro" id="IPR013342">
    <property type="entry name" value="Mandelate_racemase_C"/>
</dbReference>
<dbReference type="InterPro" id="IPR010196">
    <property type="entry name" value="OSB_synthase_MenC1"/>
</dbReference>
<dbReference type="InterPro" id="IPR041338">
    <property type="entry name" value="OSBS_N"/>
</dbReference>
<dbReference type="NCBIfam" id="TIGR01927">
    <property type="entry name" value="menC_gam_Gplu"/>
    <property type="match status" value="1"/>
</dbReference>
<dbReference type="NCBIfam" id="NF003473">
    <property type="entry name" value="PRK05105.1"/>
    <property type="match status" value="1"/>
</dbReference>
<dbReference type="PANTHER" id="PTHR48073:SF2">
    <property type="entry name" value="O-SUCCINYLBENZOATE SYNTHASE"/>
    <property type="match status" value="1"/>
</dbReference>
<dbReference type="PANTHER" id="PTHR48073">
    <property type="entry name" value="O-SUCCINYLBENZOATE SYNTHASE-RELATED"/>
    <property type="match status" value="1"/>
</dbReference>
<dbReference type="Pfam" id="PF21508">
    <property type="entry name" value="MenC_N"/>
    <property type="match status" value="1"/>
</dbReference>
<dbReference type="Pfam" id="PF13378">
    <property type="entry name" value="MR_MLE_C"/>
    <property type="match status" value="1"/>
</dbReference>
<dbReference type="SFLD" id="SFLDS00001">
    <property type="entry name" value="Enolase"/>
    <property type="match status" value="1"/>
</dbReference>
<dbReference type="SFLD" id="SFLDF00009">
    <property type="entry name" value="o-succinylbenzoate_synthase"/>
    <property type="match status" value="1"/>
</dbReference>
<dbReference type="SMART" id="SM00922">
    <property type="entry name" value="MR_MLE"/>
    <property type="match status" value="1"/>
</dbReference>
<dbReference type="SUPFAM" id="SSF51604">
    <property type="entry name" value="Enolase C-terminal domain-like"/>
    <property type="match status" value="1"/>
</dbReference>
<dbReference type="SUPFAM" id="SSF54826">
    <property type="entry name" value="Enolase N-terminal domain-like"/>
    <property type="match status" value="1"/>
</dbReference>
<sequence length="320" mass="35499">MRSAQVYRWQIPMDAGVVLRDRRLKTRDGLYVCLREGEREGWGEISPLPGFSQETWEEAQSVLLAWVNNWLAGDCELPQMPSVAFGVSCALAELADTLPQAANYRTAPLCNGDPDDLILKLADMPGEKVAKVKVGLYEAVRDGMVVNLLLEAIPDLHLRLDANRAWTPLKGQQFAKYVNPDYRHRIAFLEEPCKTRDDSRAFARETGIAIAWDESLREPDFAFVAEEGVRAVVIKPTLTGSLEKVREQVQAAHALGLTAVISSSIESSLGLTQLARIAAWLTPDTIPGLDTLDLMQAQQVRRWPGSTLPVVEVDALERLL</sequence>